<keyword id="KW-0030">Aminoacyl-tRNA synthetase</keyword>
<keyword id="KW-0067">ATP-binding</keyword>
<keyword id="KW-0963">Cytoplasm</keyword>
<keyword id="KW-0436">Ligase</keyword>
<keyword id="KW-0547">Nucleotide-binding</keyword>
<keyword id="KW-0648">Protein biosynthesis</keyword>
<keyword id="KW-1185">Reference proteome</keyword>
<dbReference type="EC" id="6.1.1.18" evidence="1"/>
<dbReference type="EMBL" id="L42023">
    <property type="protein sequence ID" value="AAC23001.1"/>
    <property type="molecule type" value="Genomic_DNA"/>
</dbReference>
<dbReference type="PIR" id="G64118">
    <property type="entry name" value="G64118"/>
</dbReference>
<dbReference type="RefSeq" id="NP_439505.1">
    <property type="nucleotide sequence ID" value="NC_000907.1"/>
</dbReference>
<dbReference type="SMR" id="P43831"/>
<dbReference type="STRING" id="71421.HI_1354"/>
<dbReference type="EnsemblBacteria" id="AAC23001">
    <property type="protein sequence ID" value="AAC23001"/>
    <property type="gene ID" value="HI_1354"/>
</dbReference>
<dbReference type="KEGG" id="hin:HI_1354"/>
<dbReference type="PATRIC" id="fig|71421.8.peg.1407"/>
<dbReference type="eggNOG" id="COG0008">
    <property type="taxonomic scope" value="Bacteria"/>
</dbReference>
<dbReference type="HOGENOM" id="CLU_001882_2_3_6"/>
<dbReference type="OrthoDB" id="9801560at2"/>
<dbReference type="PhylomeDB" id="P43831"/>
<dbReference type="BioCyc" id="HINF71421:G1GJ1-1379-MONOMER"/>
<dbReference type="Proteomes" id="UP000000579">
    <property type="component" value="Chromosome"/>
</dbReference>
<dbReference type="GO" id="GO:0005829">
    <property type="term" value="C:cytosol"/>
    <property type="evidence" value="ECO:0000318"/>
    <property type="project" value="GO_Central"/>
</dbReference>
<dbReference type="GO" id="GO:0005524">
    <property type="term" value="F:ATP binding"/>
    <property type="evidence" value="ECO:0007669"/>
    <property type="project" value="UniProtKB-UniRule"/>
</dbReference>
<dbReference type="GO" id="GO:0004819">
    <property type="term" value="F:glutamine-tRNA ligase activity"/>
    <property type="evidence" value="ECO:0000318"/>
    <property type="project" value="GO_Central"/>
</dbReference>
<dbReference type="GO" id="GO:0006425">
    <property type="term" value="P:glutaminyl-tRNA aminoacylation"/>
    <property type="evidence" value="ECO:0000318"/>
    <property type="project" value="GO_Central"/>
</dbReference>
<dbReference type="GO" id="GO:0006424">
    <property type="term" value="P:glutamyl-tRNA aminoacylation"/>
    <property type="evidence" value="ECO:0007669"/>
    <property type="project" value="UniProtKB-UniRule"/>
</dbReference>
<dbReference type="CDD" id="cd00807">
    <property type="entry name" value="GlnRS_core"/>
    <property type="match status" value="1"/>
</dbReference>
<dbReference type="FunFam" id="1.10.1160.10:FF:000001">
    <property type="entry name" value="Glutamine--tRNA ligase"/>
    <property type="match status" value="1"/>
</dbReference>
<dbReference type="FunFam" id="2.40.240.10:FF:000001">
    <property type="entry name" value="Glutamine--tRNA ligase"/>
    <property type="match status" value="1"/>
</dbReference>
<dbReference type="FunFam" id="2.40.240.10:FF:000003">
    <property type="entry name" value="Glutamine--tRNA ligase"/>
    <property type="match status" value="1"/>
</dbReference>
<dbReference type="FunFam" id="3.90.800.10:FF:000001">
    <property type="entry name" value="Glutamine--tRNA ligase"/>
    <property type="match status" value="1"/>
</dbReference>
<dbReference type="FunFam" id="3.40.50.620:FF:000037">
    <property type="entry name" value="Glutamine--tRNA ligase cytoplasmic"/>
    <property type="match status" value="1"/>
</dbReference>
<dbReference type="Gene3D" id="1.10.1160.10">
    <property type="entry name" value="Glutamyl-trna Synthetase, Domain 2"/>
    <property type="match status" value="1"/>
</dbReference>
<dbReference type="Gene3D" id="3.90.800.10">
    <property type="entry name" value="Glutamyl-tRNA Synthetase, Domain 3"/>
    <property type="match status" value="1"/>
</dbReference>
<dbReference type="Gene3D" id="3.40.50.620">
    <property type="entry name" value="HUPs"/>
    <property type="match status" value="1"/>
</dbReference>
<dbReference type="Gene3D" id="2.40.240.10">
    <property type="entry name" value="Ribosomal Protein L25, Chain P"/>
    <property type="match status" value="2"/>
</dbReference>
<dbReference type="HAMAP" id="MF_00126">
    <property type="entry name" value="Gln_tRNA_synth"/>
    <property type="match status" value="1"/>
</dbReference>
<dbReference type="InterPro" id="IPR001412">
    <property type="entry name" value="aa-tRNA-synth_I_CS"/>
</dbReference>
<dbReference type="InterPro" id="IPR004514">
    <property type="entry name" value="Gln-tRNA-synth"/>
</dbReference>
<dbReference type="InterPro" id="IPR050132">
    <property type="entry name" value="Gln/Glu-tRNA_Ligase"/>
</dbReference>
<dbReference type="InterPro" id="IPR022861">
    <property type="entry name" value="Gln_tRNA_ligase_bac"/>
</dbReference>
<dbReference type="InterPro" id="IPR000924">
    <property type="entry name" value="Glu/Gln-tRNA-synth"/>
</dbReference>
<dbReference type="InterPro" id="IPR020058">
    <property type="entry name" value="Glu/Gln-tRNA-synth_Ib_cat-dom"/>
</dbReference>
<dbReference type="InterPro" id="IPR020059">
    <property type="entry name" value="Glu/Gln-tRNA-synth_Ib_codon-bd"/>
</dbReference>
<dbReference type="InterPro" id="IPR020061">
    <property type="entry name" value="Glu_tRNA_lig_a-bdl"/>
</dbReference>
<dbReference type="InterPro" id="IPR020056">
    <property type="entry name" value="Rbsml_bL25/Gln-tRNA_synth_N"/>
</dbReference>
<dbReference type="InterPro" id="IPR011035">
    <property type="entry name" value="Ribosomal_bL25/Gln-tRNA_synth"/>
</dbReference>
<dbReference type="InterPro" id="IPR014729">
    <property type="entry name" value="Rossmann-like_a/b/a_fold"/>
</dbReference>
<dbReference type="InterPro" id="IPR049437">
    <property type="entry name" value="tRNA-synt_1c_C2"/>
</dbReference>
<dbReference type="NCBIfam" id="TIGR00440">
    <property type="entry name" value="glnS"/>
    <property type="match status" value="1"/>
</dbReference>
<dbReference type="NCBIfam" id="NF011291">
    <property type="entry name" value="PRK14703.1"/>
    <property type="match status" value="1"/>
</dbReference>
<dbReference type="PANTHER" id="PTHR43097:SF5">
    <property type="entry name" value="GLUTAMATE--TRNA LIGASE"/>
    <property type="match status" value="1"/>
</dbReference>
<dbReference type="PANTHER" id="PTHR43097">
    <property type="entry name" value="GLUTAMINE-TRNA LIGASE"/>
    <property type="match status" value="1"/>
</dbReference>
<dbReference type="Pfam" id="PF00749">
    <property type="entry name" value="tRNA-synt_1c"/>
    <property type="match status" value="1"/>
</dbReference>
<dbReference type="Pfam" id="PF03950">
    <property type="entry name" value="tRNA-synt_1c_C"/>
    <property type="match status" value="1"/>
</dbReference>
<dbReference type="Pfam" id="PF20974">
    <property type="entry name" value="tRNA-synt_1c_C2"/>
    <property type="match status" value="1"/>
</dbReference>
<dbReference type="PRINTS" id="PR00987">
    <property type="entry name" value="TRNASYNTHGLU"/>
</dbReference>
<dbReference type="SUPFAM" id="SSF52374">
    <property type="entry name" value="Nucleotidylyl transferase"/>
    <property type="match status" value="1"/>
</dbReference>
<dbReference type="SUPFAM" id="SSF50715">
    <property type="entry name" value="Ribosomal protein L25-like"/>
    <property type="match status" value="1"/>
</dbReference>
<dbReference type="PROSITE" id="PS00178">
    <property type="entry name" value="AA_TRNA_LIGASE_I"/>
    <property type="match status" value="1"/>
</dbReference>
<protein>
    <recommendedName>
        <fullName evidence="1">Glutamine--tRNA ligase</fullName>
        <ecNumber evidence="1">6.1.1.18</ecNumber>
    </recommendedName>
    <alternativeName>
        <fullName evidence="1">Glutaminyl-tRNA synthetase</fullName>
        <shortName evidence="1">GlnRS</shortName>
    </alternativeName>
</protein>
<sequence length="557" mass="64078">MMSHTETSLGAENTRTHNFITQIIDEDLASGKHKSVHTRFPPEPNGYLHIGHAKSICLNFGLAKEYQGLCNLRFDDTNPVKEDVEYVDSIKADVEWLGFKWEGEPRYASDYFDALYGYAVELIKKGLAYVDELSPDEMREYRGTLTEPGKNSPYRDRTIEENLALFEKMKNGEFAEGKASLRAKIDMASPFMVMREPVIYRIKFSSHHQTGDKWCIYPMYDFTHCISDAIERITHSICTLEFQDNRRLYDWVLENISIERPLPHQYEFSRLNLEGTLTSKRKLLKLVNDEIVDGWNDPRMPTISGLRRRGYTPASLREFCRRIGVTKQDNVVEYSALEACIREDLNENAPRAMAVIDPVRVVIENFESEAVLTAPNHPNRPELGERQLPFTKELYIDRADFREEANKQYKRLVLGKEVRLRNAYVIKAERVEKDANGEITTIFCTYDPETLGKNPADGRKVKGVIHWVSAVNNHPAEFRLYDRLFTVPNPGAEDDIESVLNPNSLVIKQGFVEQSLANAEAEKGYQFEREGYFCADSKDSRPEHLVFNLTVSLKEGF</sequence>
<proteinExistence type="inferred from homology"/>
<reference key="1">
    <citation type="journal article" date="1995" name="Science">
        <title>Whole-genome random sequencing and assembly of Haemophilus influenzae Rd.</title>
        <authorList>
            <person name="Fleischmann R.D."/>
            <person name="Adams M.D."/>
            <person name="White O."/>
            <person name="Clayton R.A."/>
            <person name="Kirkness E.F."/>
            <person name="Kerlavage A.R."/>
            <person name="Bult C.J."/>
            <person name="Tomb J.-F."/>
            <person name="Dougherty B.A."/>
            <person name="Merrick J.M."/>
            <person name="McKenney K."/>
            <person name="Sutton G.G."/>
            <person name="FitzHugh W."/>
            <person name="Fields C.A."/>
            <person name="Gocayne J.D."/>
            <person name="Scott J.D."/>
            <person name="Shirley R."/>
            <person name="Liu L.-I."/>
            <person name="Glodek A."/>
            <person name="Kelley J.M."/>
            <person name="Weidman J.F."/>
            <person name="Phillips C.A."/>
            <person name="Spriggs T."/>
            <person name="Hedblom E."/>
            <person name="Cotton M.D."/>
            <person name="Utterback T.R."/>
            <person name="Hanna M.C."/>
            <person name="Nguyen D.T."/>
            <person name="Saudek D.M."/>
            <person name="Brandon R.C."/>
            <person name="Fine L.D."/>
            <person name="Fritchman J.L."/>
            <person name="Fuhrmann J.L."/>
            <person name="Geoghagen N.S.M."/>
            <person name="Gnehm C.L."/>
            <person name="McDonald L.A."/>
            <person name="Small K.V."/>
            <person name="Fraser C.M."/>
            <person name="Smith H.O."/>
            <person name="Venter J.C."/>
        </authorList>
    </citation>
    <scope>NUCLEOTIDE SEQUENCE [LARGE SCALE GENOMIC DNA]</scope>
    <source>
        <strain>ATCC 51907 / DSM 11121 / KW20 / Rd</strain>
    </source>
</reference>
<accession>P43831</accession>
<feature type="chain" id="PRO_0000195837" description="Glutamine--tRNA ligase">
    <location>
        <begin position="1"/>
        <end position="557"/>
    </location>
</feature>
<feature type="short sequence motif" description="'HIGH' region" evidence="1">
    <location>
        <begin position="42"/>
        <end position="52"/>
    </location>
</feature>
<feature type="short sequence motif" description="'KMSKS' region" evidence="1">
    <location>
        <begin position="277"/>
        <end position="281"/>
    </location>
</feature>
<feature type="binding site" evidence="1">
    <location>
        <begin position="43"/>
        <end position="45"/>
    </location>
    <ligand>
        <name>ATP</name>
        <dbReference type="ChEBI" id="CHEBI:30616"/>
    </ligand>
</feature>
<feature type="binding site" evidence="1">
    <location>
        <begin position="49"/>
        <end position="55"/>
    </location>
    <ligand>
        <name>ATP</name>
        <dbReference type="ChEBI" id="CHEBI:30616"/>
    </ligand>
</feature>
<feature type="binding site" evidence="1">
    <location>
        <position position="75"/>
    </location>
    <ligand>
        <name>L-glutamine</name>
        <dbReference type="ChEBI" id="CHEBI:58359"/>
    </ligand>
</feature>
<feature type="binding site" evidence="1">
    <location>
        <position position="220"/>
    </location>
    <ligand>
        <name>L-glutamine</name>
        <dbReference type="ChEBI" id="CHEBI:58359"/>
    </ligand>
</feature>
<feature type="binding site" evidence="1">
    <location>
        <position position="239"/>
    </location>
    <ligand>
        <name>ATP</name>
        <dbReference type="ChEBI" id="CHEBI:30616"/>
    </ligand>
</feature>
<feature type="binding site" evidence="1">
    <location>
        <begin position="270"/>
        <end position="271"/>
    </location>
    <ligand>
        <name>ATP</name>
        <dbReference type="ChEBI" id="CHEBI:30616"/>
    </ligand>
</feature>
<gene>
    <name evidence="1" type="primary">glnS</name>
    <name type="ordered locus">HI_1354</name>
</gene>
<comment type="catalytic activity">
    <reaction evidence="1">
        <text>tRNA(Gln) + L-glutamine + ATP = L-glutaminyl-tRNA(Gln) + AMP + diphosphate</text>
        <dbReference type="Rhea" id="RHEA:20121"/>
        <dbReference type="Rhea" id="RHEA-COMP:9662"/>
        <dbReference type="Rhea" id="RHEA-COMP:9681"/>
        <dbReference type="ChEBI" id="CHEBI:30616"/>
        <dbReference type="ChEBI" id="CHEBI:33019"/>
        <dbReference type="ChEBI" id="CHEBI:58359"/>
        <dbReference type="ChEBI" id="CHEBI:78442"/>
        <dbReference type="ChEBI" id="CHEBI:78521"/>
        <dbReference type="ChEBI" id="CHEBI:456215"/>
        <dbReference type="EC" id="6.1.1.18"/>
    </reaction>
</comment>
<comment type="subunit">
    <text evidence="1">Monomer.</text>
</comment>
<comment type="subcellular location">
    <subcellularLocation>
        <location evidence="1">Cytoplasm</location>
    </subcellularLocation>
</comment>
<comment type="similarity">
    <text evidence="1 2">Belongs to the class-I aminoacyl-tRNA synthetase family.</text>
</comment>
<evidence type="ECO:0000255" key="1">
    <source>
        <dbReference type="HAMAP-Rule" id="MF_00126"/>
    </source>
</evidence>
<evidence type="ECO:0000305" key="2"/>
<organism>
    <name type="scientific">Haemophilus influenzae (strain ATCC 51907 / DSM 11121 / KW20 / Rd)</name>
    <dbReference type="NCBI Taxonomy" id="71421"/>
    <lineage>
        <taxon>Bacteria</taxon>
        <taxon>Pseudomonadati</taxon>
        <taxon>Pseudomonadota</taxon>
        <taxon>Gammaproteobacteria</taxon>
        <taxon>Pasteurellales</taxon>
        <taxon>Pasteurellaceae</taxon>
        <taxon>Haemophilus</taxon>
    </lineage>
</organism>
<name>SYQ_HAEIN</name>